<accession>Q30ZP0</accession>
<protein>
    <recommendedName>
        <fullName evidence="1">Ribosomal RNA small subunit methyltransferase A</fullName>
        <ecNumber evidence="1">2.1.1.182</ecNumber>
    </recommendedName>
    <alternativeName>
        <fullName evidence="1">16S rRNA (adenine(1518)-N(6)/adenine(1519)-N(6))-dimethyltransferase</fullName>
    </alternativeName>
    <alternativeName>
        <fullName evidence="1">16S rRNA dimethyladenosine transferase</fullName>
    </alternativeName>
    <alternativeName>
        <fullName evidence="1">16S rRNA dimethylase</fullName>
    </alternativeName>
    <alternativeName>
        <fullName evidence="1">S-adenosylmethionine-6-N', N'-adenosyl(rRNA) dimethyltransferase</fullName>
    </alternativeName>
</protein>
<gene>
    <name evidence="1" type="primary">rsmA</name>
    <name evidence="1" type="synonym">ksgA</name>
    <name type="ordered locus">Dde_2059</name>
</gene>
<comment type="function">
    <text evidence="1">Specifically dimethylates two adjacent adenosines (A1518 and A1519) in the loop of a conserved hairpin near the 3'-end of 16S rRNA in the 30S particle. May play a critical role in biogenesis of 30S subunits.</text>
</comment>
<comment type="catalytic activity">
    <reaction evidence="1">
        <text>adenosine(1518)/adenosine(1519) in 16S rRNA + 4 S-adenosyl-L-methionine = N(6)-dimethyladenosine(1518)/N(6)-dimethyladenosine(1519) in 16S rRNA + 4 S-adenosyl-L-homocysteine + 4 H(+)</text>
        <dbReference type="Rhea" id="RHEA:19609"/>
        <dbReference type="Rhea" id="RHEA-COMP:10232"/>
        <dbReference type="Rhea" id="RHEA-COMP:10233"/>
        <dbReference type="ChEBI" id="CHEBI:15378"/>
        <dbReference type="ChEBI" id="CHEBI:57856"/>
        <dbReference type="ChEBI" id="CHEBI:59789"/>
        <dbReference type="ChEBI" id="CHEBI:74411"/>
        <dbReference type="ChEBI" id="CHEBI:74493"/>
        <dbReference type="EC" id="2.1.1.182"/>
    </reaction>
</comment>
<comment type="subcellular location">
    <subcellularLocation>
        <location evidence="1">Cytoplasm</location>
    </subcellularLocation>
</comment>
<comment type="similarity">
    <text evidence="1">Belongs to the class I-like SAM-binding methyltransferase superfamily. rRNA adenine N(6)-methyltransferase family. RsmA subfamily.</text>
</comment>
<evidence type="ECO:0000255" key="1">
    <source>
        <dbReference type="HAMAP-Rule" id="MF_00607"/>
    </source>
</evidence>
<name>RSMA_OLEA2</name>
<sequence>MIDKEYQRIMTERTASAPRAKKSLGQNFLQDKNISAKIVAALQIGPADCVIEIGPGPGALTDFIQKAAPASLWLLEKDTYWAGEHRRSDSRTPVEKQVVLTDALTFPWERLSDDRSWKLIGNLPYNVASPLMWDCLSLAAFSRAVFMIQKEVGDRIVAAPRSRQYGALSVWLQSHTVPRKELIVPPTVFKPRPKVDSAVLSFAPLPLSARNFSPGALSVLLKICFQQRRKQLQKILKRYWSDAVCGWFEQQGLPPAARPEELSPNQFQQLANLLESQLVS</sequence>
<organism>
    <name type="scientific">Oleidesulfovibrio alaskensis (strain ATCC BAA-1058 / DSM 17464 / G20)</name>
    <name type="common">Desulfovibrio alaskensis</name>
    <dbReference type="NCBI Taxonomy" id="207559"/>
    <lineage>
        <taxon>Bacteria</taxon>
        <taxon>Pseudomonadati</taxon>
        <taxon>Thermodesulfobacteriota</taxon>
        <taxon>Desulfovibrionia</taxon>
        <taxon>Desulfovibrionales</taxon>
        <taxon>Desulfovibrionaceae</taxon>
        <taxon>Oleidesulfovibrio</taxon>
    </lineage>
</organism>
<feature type="chain" id="PRO_0000257284" description="Ribosomal RNA small subunit methyltransferase A">
    <location>
        <begin position="1"/>
        <end position="280"/>
    </location>
</feature>
<feature type="binding site" evidence="1">
    <location>
        <position position="27"/>
    </location>
    <ligand>
        <name>S-adenosyl-L-methionine</name>
        <dbReference type="ChEBI" id="CHEBI:59789"/>
    </ligand>
</feature>
<feature type="binding site" evidence="1">
    <location>
        <position position="29"/>
    </location>
    <ligand>
        <name>S-adenosyl-L-methionine</name>
        <dbReference type="ChEBI" id="CHEBI:59789"/>
    </ligand>
</feature>
<feature type="binding site" evidence="1">
    <location>
        <position position="54"/>
    </location>
    <ligand>
        <name>S-adenosyl-L-methionine</name>
        <dbReference type="ChEBI" id="CHEBI:59789"/>
    </ligand>
</feature>
<feature type="binding site" evidence="1">
    <location>
        <position position="76"/>
    </location>
    <ligand>
        <name>S-adenosyl-L-methionine</name>
        <dbReference type="ChEBI" id="CHEBI:59789"/>
    </ligand>
</feature>
<feature type="binding site" evidence="1">
    <location>
        <position position="102"/>
    </location>
    <ligand>
        <name>S-adenosyl-L-methionine</name>
        <dbReference type="ChEBI" id="CHEBI:59789"/>
    </ligand>
</feature>
<feature type="binding site" evidence="1">
    <location>
        <position position="122"/>
    </location>
    <ligand>
        <name>S-adenosyl-L-methionine</name>
        <dbReference type="ChEBI" id="CHEBI:59789"/>
    </ligand>
</feature>
<dbReference type="EC" id="2.1.1.182" evidence="1"/>
<dbReference type="EMBL" id="CP000112">
    <property type="protein sequence ID" value="ABB38856.1"/>
    <property type="molecule type" value="Genomic_DNA"/>
</dbReference>
<dbReference type="RefSeq" id="WP_011367961.1">
    <property type="nucleotide sequence ID" value="NC_007519.1"/>
</dbReference>
<dbReference type="SMR" id="Q30ZP0"/>
<dbReference type="STRING" id="207559.Dde_2059"/>
<dbReference type="KEGG" id="dde:Dde_2059"/>
<dbReference type="eggNOG" id="COG0030">
    <property type="taxonomic scope" value="Bacteria"/>
</dbReference>
<dbReference type="HOGENOM" id="CLU_041220_0_1_7"/>
<dbReference type="Proteomes" id="UP000002710">
    <property type="component" value="Chromosome"/>
</dbReference>
<dbReference type="GO" id="GO:0005829">
    <property type="term" value="C:cytosol"/>
    <property type="evidence" value="ECO:0007669"/>
    <property type="project" value="TreeGrafter"/>
</dbReference>
<dbReference type="GO" id="GO:0052908">
    <property type="term" value="F:16S rRNA (adenine(1518)-N(6)/adenine(1519)-N(6))-dimethyltransferase activity"/>
    <property type="evidence" value="ECO:0007669"/>
    <property type="project" value="UniProtKB-EC"/>
</dbReference>
<dbReference type="GO" id="GO:0003723">
    <property type="term" value="F:RNA binding"/>
    <property type="evidence" value="ECO:0007669"/>
    <property type="project" value="UniProtKB-KW"/>
</dbReference>
<dbReference type="Gene3D" id="1.10.8.100">
    <property type="entry name" value="Ribosomal RNA adenine dimethylase-like, domain 2"/>
    <property type="match status" value="1"/>
</dbReference>
<dbReference type="Gene3D" id="3.40.50.150">
    <property type="entry name" value="Vaccinia Virus protein VP39"/>
    <property type="match status" value="1"/>
</dbReference>
<dbReference type="HAMAP" id="MF_00607">
    <property type="entry name" value="16SrRNA_methyltr_A"/>
    <property type="match status" value="1"/>
</dbReference>
<dbReference type="InterPro" id="IPR001737">
    <property type="entry name" value="KsgA/Erm"/>
</dbReference>
<dbReference type="InterPro" id="IPR023165">
    <property type="entry name" value="rRNA_Ade_diMease-like_C"/>
</dbReference>
<dbReference type="InterPro" id="IPR020596">
    <property type="entry name" value="rRNA_Ade_Mease_Trfase_CS"/>
</dbReference>
<dbReference type="InterPro" id="IPR020598">
    <property type="entry name" value="rRNA_Ade_methylase_Trfase_N"/>
</dbReference>
<dbReference type="InterPro" id="IPR011530">
    <property type="entry name" value="rRNA_adenine_dimethylase"/>
</dbReference>
<dbReference type="InterPro" id="IPR029063">
    <property type="entry name" value="SAM-dependent_MTases_sf"/>
</dbReference>
<dbReference type="NCBIfam" id="TIGR00755">
    <property type="entry name" value="ksgA"/>
    <property type="match status" value="1"/>
</dbReference>
<dbReference type="PANTHER" id="PTHR11727">
    <property type="entry name" value="DIMETHYLADENOSINE TRANSFERASE"/>
    <property type="match status" value="1"/>
</dbReference>
<dbReference type="PANTHER" id="PTHR11727:SF7">
    <property type="entry name" value="DIMETHYLADENOSINE TRANSFERASE-RELATED"/>
    <property type="match status" value="1"/>
</dbReference>
<dbReference type="Pfam" id="PF00398">
    <property type="entry name" value="RrnaAD"/>
    <property type="match status" value="1"/>
</dbReference>
<dbReference type="SMART" id="SM00650">
    <property type="entry name" value="rADc"/>
    <property type="match status" value="1"/>
</dbReference>
<dbReference type="SUPFAM" id="SSF53335">
    <property type="entry name" value="S-adenosyl-L-methionine-dependent methyltransferases"/>
    <property type="match status" value="1"/>
</dbReference>
<dbReference type="PROSITE" id="PS01131">
    <property type="entry name" value="RRNA_A_DIMETH"/>
    <property type="match status" value="1"/>
</dbReference>
<dbReference type="PROSITE" id="PS51689">
    <property type="entry name" value="SAM_RNA_A_N6_MT"/>
    <property type="match status" value="1"/>
</dbReference>
<reference key="1">
    <citation type="journal article" date="2011" name="J. Bacteriol.">
        <title>Complete genome sequence and updated annotation of Desulfovibrio alaskensis G20.</title>
        <authorList>
            <person name="Hauser L.J."/>
            <person name="Land M.L."/>
            <person name="Brown S.D."/>
            <person name="Larimer F."/>
            <person name="Keller K.L."/>
            <person name="Rapp-Giles B.J."/>
            <person name="Price M.N."/>
            <person name="Lin M."/>
            <person name="Bruce D.C."/>
            <person name="Detter J.C."/>
            <person name="Tapia R."/>
            <person name="Han C.S."/>
            <person name="Goodwin L.A."/>
            <person name="Cheng J.F."/>
            <person name="Pitluck S."/>
            <person name="Copeland A."/>
            <person name="Lucas S."/>
            <person name="Nolan M."/>
            <person name="Lapidus A.L."/>
            <person name="Palumbo A.V."/>
            <person name="Wall J.D."/>
        </authorList>
    </citation>
    <scope>NUCLEOTIDE SEQUENCE [LARGE SCALE GENOMIC DNA]</scope>
    <source>
        <strain>ATCC BAA-1058 / DSM 17464 / G20</strain>
    </source>
</reference>
<proteinExistence type="inferred from homology"/>
<keyword id="KW-0963">Cytoplasm</keyword>
<keyword id="KW-0489">Methyltransferase</keyword>
<keyword id="KW-1185">Reference proteome</keyword>
<keyword id="KW-0694">RNA-binding</keyword>
<keyword id="KW-0698">rRNA processing</keyword>
<keyword id="KW-0949">S-adenosyl-L-methionine</keyword>
<keyword id="KW-0808">Transferase</keyword>